<feature type="chain" id="PRO_0000235233" description="Type 1 phosphatidylinositol 4,5-bisphosphate 4-phosphatase">
    <location>
        <begin position="1"/>
        <end position="284"/>
    </location>
</feature>
<feature type="transmembrane region" description="Helical" evidence="4">
    <location>
        <begin position="219"/>
        <end position="239"/>
    </location>
</feature>
<feature type="transmembrane region" description="Helical" evidence="4">
    <location>
        <begin position="249"/>
        <end position="269"/>
    </location>
</feature>
<feature type="region of interest" description="Disordered" evidence="5">
    <location>
        <begin position="1"/>
        <end position="81"/>
    </location>
</feature>
<feature type="short sequence motif" description="CX5R motif">
    <location>
        <begin position="140"/>
        <end position="146"/>
    </location>
</feature>
<feature type="compositionally biased region" description="Gly residues" evidence="5">
    <location>
        <begin position="17"/>
        <end position="38"/>
    </location>
</feature>
<feature type="active site" evidence="1">
    <location>
        <position position="140"/>
    </location>
</feature>
<feature type="modified residue" description="Phosphoserine" evidence="2">
    <location>
        <position position="169"/>
    </location>
</feature>
<name>PP4P1_MACFA</name>
<keyword id="KW-1003">Cell membrane</keyword>
<keyword id="KW-0968">Cytoplasmic vesicle</keyword>
<keyword id="KW-0967">Endosome</keyword>
<keyword id="KW-0378">Hydrolase</keyword>
<keyword id="KW-0443">Lipid metabolism</keyword>
<keyword id="KW-0458">Lysosome</keyword>
<keyword id="KW-0472">Membrane</keyword>
<keyword id="KW-0597">Phosphoprotein</keyword>
<keyword id="KW-1185">Reference proteome</keyword>
<keyword id="KW-0812">Transmembrane</keyword>
<keyword id="KW-1133">Transmembrane helix</keyword>
<gene>
    <name evidence="3" type="primary">PIP4P1</name>
    <name evidence="3" type="synonym">TMEM55B</name>
    <name type="ORF">QtsA-17009</name>
</gene>
<organism>
    <name type="scientific">Macaca fascicularis</name>
    <name type="common">Crab-eating macaque</name>
    <name type="synonym">Cynomolgus monkey</name>
    <dbReference type="NCBI Taxonomy" id="9541"/>
    <lineage>
        <taxon>Eukaryota</taxon>
        <taxon>Metazoa</taxon>
        <taxon>Chordata</taxon>
        <taxon>Craniata</taxon>
        <taxon>Vertebrata</taxon>
        <taxon>Euteleostomi</taxon>
        <taxon>Mammalia</taxon>
        <taxon>Eutheria</taxon>
        <taxon>Euarchontoglires</taxon>
        <taxon>Primates</taxon>
        <taxon>Haplorrhini</taxon>
        <taxon>Catarrhini</taxon>
        <taxon>Cercopithecidae</taxon>
        <taxon>Cercopithecinae</taxon>
        <taxon>Macaca</taxon>
    </lineage>
</organism>
<proteinExistence type="evidence at transcript level"/>
<comment type="function">
    <text evidence="3">Catalyzes the hydrolysis of phosphatidylinositol-4,5-bisphosphate (PtdIns-4,5-P2) to phosphatidylinositol-4-phosphate (PtdIns-4-P) (By similarity). Does not hydrolyze phosphatidylinositol 3,4,5-trisphosphate, phosphatidylinositol 3,4-bisphosphate, inositol 3,5-bisphosphate, inositol 3,4-bisphosphate, phosphatidylinositol 5-monophosphate, phosphatidylinositol 4-monophosphate and phosphatidylinositol 3-monophosphate (By similarity). Regulates lysosomal positioning by recruiting JIP4 to lysosomal membranes, thus inducing retrograde transport of lysosomes along microtubules (By similarity). Contributes to assembly of the V-ATPase complex in lipid rafts of the lysosomal membrane and to subsequent amino acid-dependent activation of mTORC1 (By similarity). May play a role in the regulation of cellular cholesterol metabolism (By similarity).</text>
</comment>
<comment type="catalytic activity">
    <reaction evidence="3">
        <text>a 1,2-diacyl-sn-glycero-3-phospho-(1D-myo-inositol-4,5-bisphosphate) + H2O = a 1,2-diacyl-sn-glycero-3-phospho-(1D-myo-inositol-5-phosphate) + phosphate</text>
        <dbReference type="Rhea" id="RHEA:25674"/>
        <dbReference type="ChEBI" id="CHEBI:15377"/>
        <dbReference type="ChEBI" id="CHEBI:43474"/>
        <dbReference type="ChEBI" id="CHEBI:57795"/>
        <dbReference type="ChEBI" id="CHEBI:58456"/>
        <dbReference type="EC" id="3.1.3.78"/>
    </reaction>
</comment>
<comment type="subunit">
    <text evidence="2">Interacts (via transmembrane domain) with ATP6V0D1 (By similarity). Interacts with LAMTOR1, RRAGA and RRAGC (By similarity).</text>
</comment>
<comment type="subcellular location">
    <subcellularLocation>
        <location evidence="2">Late endosome membrane</location>
        <topology evidence="4">Multi-pass membrane protein</topology>
    </subcellularLocation>
    <subcellularLocation>
        <location evidence="2">Lysosome membrane</location>
        <topology evidence="4">Multi-pass membrane protein</topology>
    </subcellularLocation>
    <subcellularLocation>
        <location evidence="2">Cytoplasmic vesicle</location>
        <location evidence="2">Phagosome membrane</location>
        <topology evidence="4">Multi-pass membrane protein</topology>
    </subcellularLocation>
    <subcellularLocation>
        <location evidence="2">Cell membrane</location>
        <topology evidence="4">Multi-pass membrane protein</topology>
    </subcellularLocation>
</comment>
<reference key="1">
    <citation type="submission" date="2005-06" db="EMBL/GenBank/DDBJ databases">
        <title>DNA sequences of macaque genes expressed in brain or testis and its evolutionary implications.</title>
        <authorList>
            <consortium name="International consortium for macaque cDNA sequencing and analysis"/>
        </authorList>
    </citation>
    <scope>NUCLEOTIDE SEQUENCE [LARGE SCALE MRNA]</scope>
    <source>
        <tissue>Testis</tissue>
    </source>
</reference>
<evidence type="ECO:0000250" key="1"/>
<evidence type="ECO:0000250" key="2">
    <source>
        <dbReference type="UniProtKB" id="Q3TWL2"/>
    </source>
</evidence>
<evidence type="ECO:0000250" key="3">
    <source>
        <dbReference type="UniProtKB" id="Q86T03"/>
    </source>
</evidence>
<evidence type="ECO:0000255" key="4"/>
<evidence type="ECO:0000256" key="5">
    <source>
        <dbReference type="SAM" id="MobiDB-lite"/>
    </source>
</evidence>
<accession>Q4R6W2</accession>
<protein>
    <recommendedName>
        <fullName>Type 1 phosphatidylinositol 4,5-bisphosphate 4-phosphatase</fullName>
        <shortName>Type 1 PtdIns-4,5-P2 4-Ptase</shortName>
        <ecNumber evidence="3">3.1.3.78</ecNumber>
    </recommendedName>
    <alternativeName>
        <fullName>PtdIns-4,5-P2 4-Ptase I</fullName>
    </alternativeName>
    <alternativeName>
        <fullName>Transmembrane protein 55B</fullName>
    </alternativeName>
</protein>
<dbReference type="EC" id="3.1.3.78" evidence="3"/>
<dbReference type="EMBL" id="AB169068">
    <property type="protein sequence ID" value="BAE01162.1"/>
    <property type="molecule type" value="mRNA"/>
</dbReference>
<dbReference type="RefSeq" id="NP_001270945.1">
    <property type="nucleotide sequence ID" value="NM_001284016.1"/>
</dbReference>
<dbReference type="RefSeq" id="XP_015308695.1">
    <property type="nucleotide sequence ID" value="XM_015453209.3"/>
</dbReference>
<dbReference type="SMR" id="Q4R6W2"/>
<dbReference type="STRING" id="9541.ENSMFAP00000043605"/>
<dbReference type="GeneID" id="101866619"/>
<dbReference type="KEGG" id="mcf:101866619"/>
<dbReference type="CTD" id="90809"/>
<dbReference type="eggNOG" id="KOG4684">
    <property type="taxonomic scope" value="Eukaryota"/>
</dbReference>
<dbReference type="OrthoDB" id="9550at314294"/>
<dbReference type="Proteomes" id="UP000233100">
    <property type="component" value="Unplaced"/>
</dbReference>
<dbReference type="GO" id="GO:0031902">
    <property type="term" value="C:late endosome membrane"/>
    <property type="evidence" value="ECO:0000250"/>
    <property type="project" value="UniProtKB"/>
</dbReference>
<dbReference type="GO" id="GO:0005765">
    <property type="term" value="C:lysosomal membrane"/>
    <property type="evidence" value="ECO:0000250"/>
    <property type="project" value="UniProtKB"/>
</dbReference>
<dbReference type="GO" id="GO:0030670">
    <property type="term" value="C:phagocytic vesicle membrane"/>
    <property type="evidence" value="ECO:0000250"/>
    <property type="project" value="UniProtKB"/>
</dbReference>
<dbReference type="GO" id="GO:0005886">
    <property type="term" value="C:plasma membrane"/>
    <property type="evidence" value="ECO:0000250"/>
    <property type="project" value="UniProtKB"/>
</dbReference>
<dbReference type="GO" id="GO:0034597">
    <property type="term" value="F:phosphatidylinositol-4,5-bisphosphate 4-phosphatase activity"/>
    <property type="evidence" value="ECO:0007669"/>
    <property type="project" value="UniProtKB-EC"/>
</dbReference>
<dbReference type="GO" id="GO:0008203">
    <property type="term" value="P:cholesterol metabolic process"/>
    <property type="evidence" value="ECO:0000250"/>
    <property type="project" value="UniProtKB"/>
</dbReference>
<dbReference type="GO" id="GO:0032418">
    <property type="term" value="P:lysosome localization"/>
    <property type="evidence" value="ECO:0000250"/>
    <property type="project" value="UniProtKB"/>
</dbReference>
<dbReference type="GO" id="GO:0046856">
    <property type="term" value="P:phosphatidylinositol dephosphorylation"/>
    <property type="evidence" value="ECO:0007669"/>
    <property type="project" value="InterPro"/>
</dbReference>
<dbReference type="GO" id="GO:1904263">
    <property type="term" value="P:positive regulation of TORC1 signaling"/>
    <property type="evidence" value="ECO:0000250"/>
    <property type="project" value="UniProtKB"/>
</dbReference>
<dbReference type="GO" id="GO:0070070">
    <property type="term" value="P:proton-transporting V-type ATPase complex assembly"/>
    <property type="evidence" value="ECO:0000250"/>
    <property type="project" value="UniProtKB"/>
</dbReference>
<dbReference type="GO" id="GO:0006991">
    <property type="term" value="P:response to sterol depletion"/>
    <property type="evidence" value="ECO:0000250"/>
    <property type="project" value="UniProtKB"/>
</dbReference>
<dbReference type="InterPro" id="IPR019178">
    <property type="entry name" value="PtdIns-P2-Ptase"/>
</dbReference>
<dbReference type="PANTHER" id="PTHR21014">
    <property type="entry name" value="PHOSPHATIDYLINOSITOL-4,5-BISPHOSPHATE 4-PHOSPHATASE"/>
    <property type="match status" value="1"/>
</dbReference>
<dbReference type="PANTHER" id="PTHR21014:SF2">
    <property type="entry name" value="TYPE 1 PHOSPHATIDYLINOSITOL 4,5-BISPHOSPHATE 4-PHOSPHATASE"/>
    <property type="match status" value="1"/>
</dbReference>
<dbReference type="Pfam" id="PF09788">
    <property type="entry name" value="Tmemb_55A"/>
    <property type="match status" value="1"/>
</dbReference>
<sequence length="284" mass="30185">MAADGERSPLLSEPIDGGAGGNGLVGPGGSGAGPGGGLTPSAPPYGAGKHAPPQAFPPFPEGHPAVLPGEDPPPYSPLTSPDSGSAPMITCRVCQSLINVEGKMHQHVVKCGVCNEATPIKNAPPGKKYVRCPCNCLLICKVTSQRIACPRPYCKRIINLGPVHPGPLSPEPQPMGVRVICGHCKNTFLWTEFTDRTLARCPHCRKVSSIGRRYPRKRCICCFLLGLLLAVTATGLAFGTWKHARRYGGIYAAWAFVILLAVLCLGRALYWACMKVSHPVQNFS</sequence>